<gene>
    <name type="primary">HMG1A</name>
</gene>
<proteinExistence type="inferred from homology"/>
<comment type="function">
    <text>Found in condensed chromomeres. Binds preferentially to AT-rich DNA.</text>
</comment>
<comment type="subcellular location">
    <subcellularLocation>
        <location>Nucleus</location>
    </subcellularLocation>
    <subcellularLocation>
        <location>Chromosome</location>
    </subcellularLocation>
</comment>
<comment type="similarity">
    <text evidence="3">Belongs to the HMGB family.</text>
</comment>
<organism>
    <name type="scientific">Chironomus tentans</name>
    <name type="common">Midge</name>
    <name type="synonym">Camptochironomus tentans</name>
    <dbReference type="NCBI Taxonomy" id="7153"/>
    <lineage>
        <taxon>Eukaryota</taxon>
        <taxon>Metazoa</taxon>
        <taxon>Ecdysozoa</taxon>
        <taxon>Arthropoda</taxon>
        <taxon>Hexapoda</taxon>
        <taxon>Insecta</taxon>
        <taxon>Pterygota</taxon>
        <taxon>Neoptera</taxon>
        <taxon>Endopterygota</taxon>
        <taxon>Diptera</taxon>
        <taxon>Nematocera</taxon>
        <taxon>Chironomoidea</taxon>
        <taxon>Chironomidae</taxon>
        <taxon>Chironominae</taxon>
        <taxon>Chironomus</taxon>
    </lineage>
</organism>
<protein>
    <recommendedName>
        <fullName>Mobility group protein 1A</fullName>
    </recommendedName>
</protein>
<feature type="chain" id="PRO_0000048550" description="Mobility group protein 1A">
    <location>
        <begin position="1"/>
        <end position="114"/>
    </location>
</feature>
<feature type="DNA-binding region" description="HMG box" evidence="1">
    <location>
        <begin position="5"/>
        <end position="71"/>
    </location>
</feature>
<feature type="region of interest" description="Disordered" evidence="2">
    <location>
        <begin position="69"/>
        <end position="114"/>
    </location>
</feature>
<feature type="compositionally biased region" description="Acidic residues" evidence="2">
    <location>
        <begin position="105"/>
        <end position="114"/>
    </location>
</feature>
<evidence type="ECO:0000255" key="1">
    <source>
        <dbReference type="PROSITE-ProRule" id="PRU00267"/>
    </source>
</evidence>
<evidence type="ECO:0000256" key="2">
    <source>
        <dbReference type="SAM" id="MobiDB-lite"/>
    </source>
</evidence>
<evidence type="ECO:0000305" key="3"/>
<reference key="1">
    <citation type="journal article" date="1992" name="J. Biol. Chem.">
        <title>Insect proteins homologous to mammalian high mobility group protein 1. Characterization and DNA-binding properties.</title>
        <authorList>
            <person name="Wisniewski J.R."/>
            <person name="Schulze E."/>
        </authorList>
    </citation>
    <scope>NUCLEOTIDE SEQUENCE [MRNA]</scope>
    <source>
        <tissue>Embryonic epithelium</tissue>
    </source>
</reference>
<dbReference type="EMBL" id="M93253">
    <property type="protein sequence ID" value="AAA21712.1"/>
    <property type="molecule type" value="mRNA"/>
</dbReference>
<dbReference type="PIR" id="A43436">
    <property type="entry name" value="A43436"/>
</dbReference>
<dbReference type="SMR" id="P40622"/>
<dbReference type="GO" id="GO:0005694">
    <property type="term" value="C:chromosome"/>
    <property type="evidence" value="ECO:0007669"/>
    <property type="project" value="UniProtKB-SubCell"/>
</dbReference>
<dbReference type="GO" id="GO:0005634">
    <property type="term" value="C:nucleus"/>
    <property type="evidence" value="ECO:0007669"/>
    <property type="project" value="UniProtKB-SubCell"/>
</dbReference>
<dbReference type="GO" id="GO:0003677">
    <property type="term" value="F:DNA binding"/>
    <property type="evidence" value="ECO:0007669"/>
    <property type="project" value="UniProtKB-KW"/>
</dbReference>
<dbReference type="GO" id="GO:0006357">
    <property type="term" value="P:regulation of transcription by RNA polymerase II"/>
    <property type="evidence" value="ECO:0007669"/>
    <property type="project" value="TreeGrafter"/>
</dbReference>
<dbReference type="CDD" id="cd21994">
    <property type="entry name" value="HMG-box_SSRP1-like"/>
    <property type="match status" value="1"/>
</dbReference>
<dbReference type="FunFam" id="1.10.30.10:FF:000036">
    <property type="entry name" value="high mobility group protein D"/>
    <property type="match status" value="1"/>
</dbReference>
<dbReference type="Gene3D" id="1.10.30.10">
    <property type="entry name" value="High mobility group box domain"/>
    <property type="match status" value="1"/>
</dbReference>
<dbReference type="InterPro" id="IPR009071">
    <property type="entry name" value="HMG_box_dom"/>
</dbReference>
<dbReference type="InterPro" id="IPR036910">
    <property type="entry name" value="HMG_box_dom_sf"/>
</dbReference>
<dbReference type="InterPro" id="IPR050342">
    <property type="entry name" value="HMGB"/>
</dbReference>
<dbReference type="PANTHER" id="PTHR48112:SF20">
    <property type="entry name" value="HIGH MOBILITY GROUP PROTEIN D-RELATED"/>
    <property type="match status" value="1"/>
</dbReference>
<dbReference type="PANTHER" id="PTHR48112">
    <property type="entry name" value="HIGH MOBILITY GROUP PROTEIN DSP1"/>
    <property type="match status" value="1"/>
</dbReference>
<dbReference type="Pfam" id="PF00505">
    <property type="entry name" value="HMG_box"/>
    <property type="match status" value="1"/>
</dbReference>
<dbReference type="SMART" id="SM00398">
    <property type="entry name" value="HMG"/>
    <property type="match status" value="1"/>
</dbReference>
<dbReference type="SUPFAM" id="SSF47095">
    <property type="entry name" value="HMG-box"/>
    <property type="match status" value="1"/>
</dbReference>
<dbReference type="PROSITE" id="PS50118">
    <property type="entry name" value="HMG_BOX_2"/>
    <property type="match status" value="1"/>
</dbReference>
<name>HMG1A_CHITE</name>
<accession>P40622</accession>
<sequence length="114" mass="13046">MAEKPKRPLSAYMLWLNSARESIKKENPDFKVTEIAKKGGELWRGMKDKSEWEAKAAKMKEEYEKAMKEFERNGGDKSSGASTKKRGKAAEKKKPAKKSKKKDSEDDEEEDESD</sequence>
<keyword id="KW-0158">Chromosome</keyword>
<keyword id="KW-0238">DNA-binding</keyword>
<keyword id="KW-0539">Nucleus</keyword>